<dbReference type="EMBL" id="CH445331">
    <property type="protein sequence ID" value="EAT87641.1"/>
    <property type="molecule type" value="Genomic_DNA"/>
</dbReference>
<dbReference type="RefSeq" id="XP_001795658.1">
    <property type="nucleotide sequence ID" value="XM_001795606.1"/>
</dbReference>
<dbReference type="SMR" id="Q0USL4"/>
<dbReference type="FunCoup" id="Q0USL4">
    <property type="interactions" value="9"/>
</dbReference>
<dbReference type="STRING" id="321614.Q0USL4"/>
<dbReference type="EnsemblFungi" id="SNOT_05250">
    <property type="protein sequence ID" value="SNOT_05250"/>
    <property type="gene ID" value="SNOG_05250"/>
</dbReference>
<dbReference type="GeneID" id="5972533"/>
<dbReference type="KEGG" id="pno:SNOG_05250"/>
<dbReference type="VEuPathDB" id="FungiDB:JI435_052500"/>
<dbReference type="eggNOG" id="ENOG502RNK4">
    <property type="taxonomic scope" value="Eukaryota"/>
</dbReference>
<dbReference type="HOGENOM" id="CLU_033658_0_0_1"/>
<dbReference type="InParanoid" id="Q0USL4"/>
<dbReference type="OMA" id="DYTPHFL"/>
<dbReference type="OrthoDB" id="10061064at2759"/>
<dbReference type="Proteomes" id="UP000001055">
    <property type="component" value="Unassembled WGS sequence"/>
</dbReference>
<dbReference type="GO" id="GO:0005737">
    <property type="term" value="C:cytoplasm"/>
    <property type="evidence" value="ECO:0007669"/>
    <property type="project" value="UniProtKB-SubCell"/>
</dbReference>
<dbReference type="GO" id="GO:0005634">
    <property type="term" value="C:nucleus"/>
    <property type="evidence" value="ECO:0007669"/>
    <property type="project" value="UniProtKB-SubCell"/>
</dbReference>
<dbReference type="GO" id="GO:0070628">
    <property type="term" value="F:proteasome binding"/>
    <property type="evidence" value="ECO:0000318"/>
    <property type="project" value="GO_Central"/>
</dbReference>
<dbReference type="GO" id="GO:0071630">
    <property type="term" value="P:nuclear protein quality control by the ubiquitin-proteasome system"/>
    <property type="evidence" value="ECO:0000318"/>
    <property type="project" value="GO_Central"/>
</dbReference>
<dbReference type="GO" id="GO:0031144">
    <property type="term" value="P:proteasome localization"/>
    <property type="evidence" value="ECO:0000318"/>
    <property type="project" value="GO_Central"/>
</dbReference>
<dbReference type="GO" id="GO:0015031">
    <property type="term" value="P:protein transport"/>
    <property type="evidence" value="ECO:0007669"/>
    <property type="project" value="UniProtKB-KW"/>
</dbReference>
<dbReference type="FunFam" id="1.20.58.1590:FF:000001">
    <property type="entry name" value="Tethering factor for nuclear proteasome STS1"/>
    <property type="match status" value="1"/>
</dbReference>
<dbReference type="Gene3D" id="1.20.58.1590">
    <property type="entry name" value="Tethering factor for nuclear proteasome Cut8/Sts1"/>
    <property type="match status" value="1"/>
</dbReference>
<dbReference type="InterPro" id="IPR013868">
    <property type="entry name" value="Cut8/Sts1_fam"/>
</dbReference>
<dbReference type="InterPro" id="IPR038422">
    <property type="entry name" value="Cut8/Sts1_sf"/>
</dbReference>
<dbReference type="PANTHER" id="PTHR28032">
    <property type="entry name" value="FI02826P"/>
    <property type="match status" value="1"/>
</dbReference>
<dbReference type="PANTHER" id="PTHR28032:SF1">
    <property type="entry name" value="FI02826P"/>
    <property type="match status" value="1"/>
</dbReference>
<dbReference type="Pfam" id="PF08559">
    <property type="entry name" value="Cut8"/>
    <property type="match status" value="1"/>
</dbReference>
<feature type="chain" id="PRO_0000409425" description="Tethering factor for nuclear proteasome STS1">
    <location>
        <begin position="1"/>
        <end position="306"/>
    </location>
</feature>
<feature type="region of interest" description="Disordered" evidence="2">
    <location>
        <begin position="1"/>
        <end position="64"/>
    </location>
</feature>
<feature type="compositionally biased region" description="Polar residues" evidence="2">
    <location>
        <begin position="16"/>
        <end position="30"/>
    </location>
</feature>
<feature type="compositionally biased region" description="Basic and acidic residues" evidence="2">
    <location>
        <begin position="36"/>
        <end position="47"/>
    </location>
</feature>
<evidence type="ECO:0000250" key="1"/>
<evidence type="ECO:0000256" key="2">
    <source>
        <dbReference type="SAM" id="MobiDB-lite"/>
    </source>
</evidence>
<evidence type="ECO:0000305" key="3"/>
<proteinExistence type="inferred from homology"/>
<comment type="function">
    <text evidence="1">Involved in ubiquitin-mediated protein degradation. Regulatory factor in the ubiquitin/proteasome pathway that controls the turnover of proteasome substrates. Targets proteasomes to the nucleus and facilitates the degradation of nuclear proteins (By similarity).</text>
</comment>
<comment type="subunit">
    <text evidence="1">Binds the proteasome.</text>
</comment>
<comment type="subcellular location">
    <subcellularLocation>
        <location evidence="1">Cytoplasm</location>
    </subcellularLocation>
    <subcellularLocation>
        <location evidence="1">Nucleus</location>
    </subcellularLocation>
</comment>
<comment type="similarity">
    <text evidence="3">Belongs to the cut8/STS1 family.</text>
</comment>
<name>STS1_PHANO</name>
<gene>
    <name type="primary">STS1</name>
    <name type="ORF">SNOG_05250</name>
</gene>
<accession>Q0USL4</accession>
<keyword id="KW-0963">Cytoplasm</keyword>
<keyword id="KW-0539">Nucleus</keyword>
<keyword id="KW-0653">Protein transport</keyword>
<keyword id="KW-0813">Transport</keyword>
<reference key="1">
    <citation type="journal article" date="2007" name="Plant Cell">
        <title>Dothideomycete-plant interactions illuminated by genome sequencing and EST analysis of the wheat pathogen Stagonospora nodorum.</title>
        <authorList>
            <person name="Hane J.K."/>
            <person name="Lowe R.G.T."/>
            <person name="Solomon P.S."/>
            <person name="Tan K.-C."/>
            <person name="Schoch C.L."/>
            <person name="Spatafora J.W."/>
            <person name="Crous P.W."/>
            <person name="Kodira C.D."/>
            <person name="Birren B.W."/>
            <person name="Galagan J.E."/>
            <person name="Torriani S.F.F."/>
            <person name="McDonald B.A."/>
            <person name="Oliver R.P."/>
        </authorList>
    </citation>
    <scope>NUCLEOTIDE SEQUENCE [LARGE SCALE GENOMIC DNA]</scope>
    <source>
        <strain>SN15 / ATCC MYA-4574 / FGSC 10173</strain>
    </source>
</reference>
<protein>
    <recommendedName>
        <fullName>Tethering factor for nuclear proteasome STS1</fullName>
    </recommendedName>
</protein>
<sequence length="306" mass="33892">MNAIHGSFTPPHLLNNRHSPTRNIYPSSAMTGRKRKADDDGSSDDRMSASPSISSAELPRQQPRHMKRMRTNLSGRPLPLPRLLETLSADEMRNLLQSICQRHPDIGNEVVSTAPRPSIQSTLEVLSKYESAFQSAFPFGGRASSDYAYNRVRQQLIELLESLKDFTPHYLPPNEQQSATSLAFLDGATEIIHRLPNWDTYQHNRHKEEAYEEMAKAWAIVFREAAKKAGGIQLQYGGWDQKIAKHNEHSGGKMQEAVNELRGGLGWMGADAPAPAASGPEDAMSIRQQLLSGNYGMGSSASIGAW</sequence>
<organism>
    <name type="scientific">Phaeosphaeria nodorum (strain SN15 / ATCC MYA-4574 / FGSC 10173)</name>
    <name type="common">Glume blotch fungus</name>
    <name type="synonym">Parastagonospora nodorum</name>
    <dbReference type="NCBI Taxonomy" id="321614"/>
    <lineage>
        <taxon>Eukaryota</taxon>
        <taxon>Fungi</taxon>
        <taxon>Dikarya</taxon>
        <taxon>Ascomycota</taxon>
        <taxon>Pezizomycotina</taxon>
        <taxon>Dothideomycetes</taxon>
        <taxon>Pleosporomycetidae</taxon>
        <taxon>Pleosporales</taxon>
        <taxon>Pleosporineae</taxon>
        <taxon>Phaeosphaeriaceae</taxon>
        <taxon>Parastagonospora</taxon>
    </lineage>
</organism>